<gene>
    <name evidence="1" type="primary">hisF</name>
    <name type="ordered locus">ASA_2110</name>
</gene>
<accession>A4SMQ4</accession>
<sequence>MLSKRIIPCLDVKDGVVVKGVQFRNHEVMGGIVELARRYAEEGADELVFYDITASSDARVVDKSWVSRVAEVIDIPFCVAGGIKSVEDARQILEFGADKVSINSPALADPGLITRLAERFGVQCVVVGIDSYFDADTGHYQVKQFTGDESRTRTTAWHTLDWVQEAQKRGAGEIVLNVMNQDGMRQGYDLEQLKLVRAVCKVPLIASGGAGAMEHFRDAFTLADVDGALAASVFHKGLIPIPELKRWLKNEGVAIRE</sequence>
<reference key="1">
    <citation type="journal article" date="2008" name="BMC Genomics">
        <title>The genome of Aeromonas salmonicida subsp. salmonicida A449: insights into the evolution of a fish pathogen.</title>
        <authorList>
            <person name="Reith M.E."/>
            <person name="Singh R.K."/>
            <person name="Curtis B."/>
            <person name="Boyd J.M."/>
            <person name="Bouevitch A."/>
            <person name="Kimball J."/>
            <person name="Munholland J."/>
            <person name="Murphy C."/>
            <person name="Sarty D."/>
            <person name="Williams J."/>
            <person name="Nash J.H."/>
            <person name="Johnson S.C."/>
            <person name="Brown L.L."/>
        </authorList>
    </citation>
    <scope>NUCLEOTIDE SEQUENCE [LARGE SCALE GENOMIC DNA]</scope>
    <source>
        <strain>A449</strain>
    </source>
</reference>
<feature type="chain" id="PRO_1000063017" description="Imidazole glycerol phosphate synthase subunit HisF">
    <location>
        <begin position="1"/>
        <end position="257"/>
    </location>
</feature>
<feature type="active site" evidence="1">
    <location>
        <position position="11"/>
    </location>
</feature>
<feature type="active site" evidence="1">
    <location>
        <position position="130"/>
    </location>
</feature>
<proteinExistence type="inferred from homology"/>
<organism>
    <name type="scientific">Aeromonas salmonicida (strain A449)</name>
    <dbReference type="NCBI Taxonomy" id="382245"/>
    <lineage>
        <taxon>Bacteria</taxon>
        <taxon>Pseudomonadati</taxon>
        <taxon>Pseudomonadota</taxon>
        <taxon>Gammaproteobacteria</taxon>
        <taxon>Aeromonadales</taxon>
        <taxon>Aeromonadaceae</taxon>
        <taxon>Aeromonas</taxon>
    </lineage>
</organism>
<keyword id="KW-0028">Amino-acid biosynthesis</keyword>
<keyword id="KW-0963">Cytoplasm</keyword>
<keyword id="KW-0368">Histidine biosynthesis</keyword>
<keyword id="KW-0456">Lyase</keyword>
<protein>
    <recommendedName>
        <fullName evidence="1">Imidazole glycerol phosphate synthase subunit HisF</fullName>
        <ecNumber evidence="1">4.3.2.10</ecNumber>
    </recommendedName>
    <alternativeName>
        <fullName evidence="1">IGP synthase cyclase subunit</fullName>
    </alternativeName>
    <alternativeName>
        <fullName evidence="1">IGP synthase subunit HisF</fullName>
    </alternativeName>
    <alternativeName>
        <fullName evidence="1">ImGP synthase subunit HisF</fullName>
        <shortName evidence="1">IGPS subunit HisF</shortName>
    </alternativeName>
</protein>
<comment type="function">
    <text evidence="1">IGPS catalyzes the conversion of PRFAR and glutamine to IGP, AICAR and glutamate. The HisF subunit catalyzes the cyclization activity that produces IGP and AICAR from PRFAR using the ammonia provided by the HisH subunit.</text>
</comment>
<comment type="catalytic activity">
    <reaction evidence="1">
        <text>5-[(5-phospho-1-deoxy-D-ribulos-1-ylimino)methylamino]-1-(5-phospho-beta-D-ribosyl)imidazole-4-carboxamide + L-glutamine = D-erythro-1-(imidazol-4-yl)glycerol 3-phosphate + 5-amino-1-(5-phospho-beta-D-ribosyl)imidazole-4-carboxamide + L-glutamate + H(+)</text>
        <dbReference type="Rhea" id="RHEA:24793"/>
        <dbReference type="ChEBI" id="CHEBI:15378"/>
        <dbReference type="ChEBI" id="CHEBI:29985"/>
        <dbReference type="ChEBI" id="CHEBI:58278"/>
        <dbReference type="ChEBI" id="CHEBI:58359"/>
        <dbReference type="ChEBI" id="CHEBI:58475"/>
        <dbReference type="ChEBI" id="CHEBI:58525"/>
        <dbReference type="EC" id="4.3.2.10"/>
    </reaction>
</comment>
<comment type="pathway">
    <text evidence="1">Amino-acid biosynthesis; L-histidine biosynthesis; L-histidine from 5-phospho-alpha-D-ribose 1-diphosphate: step 5/9.</text>
</comment>
<comment type="subunit">
    <text evidence="1">Heterodimer of HisH and HisF.</text>
</comment>
<comment type="subcellular location">
    <subcellularLocation>
        <location evidence="1">Cytoplasm</location>
    </subcellularLocation>
</comment>
<comment type="similarity">
    <text evidence="1">Belongs to the HisA/HisF family.</text>
</comment>
<dbReference type="EC" id="4.3.2.10" evidence="1"/>
<dbReference type="EMBL" id="CP000644">
    <property type="protein sequence ID" value="ABO90176.1"/>
    <property type="molecule type" value="Genomic_DNA"/>
</dbReference>
<dbReference type="RefSeq" id="WP_005311371.1">
    <property type="nucleotide sequence ID" value="NC_009348.1"/>
</dbReference>
<dbReference type="SMR" id="A4SMQ4"/>
<dbReference type="STRING" id="29491.GCA_000820065_00720"/>
<dbReference type="GeneID" id="79879951"/>
<dbReference type="KEGG" id="asa:ASA_2110"/>
<dbReference type="eggNOG" id="COG0107">
    <property type="taxonomic scope" value="Bacteria"/>
</dbReference>
<dbReference type="HOGENOM" id="CLU_048577_4_0_6"/>
<dbReference type="UniPathway" id="UPA00031">
    <property type="reaction ID" value="UER00010"/>
</dbReference>
<dbReference type="Proteomes" id="UP000000225">
    <property type="component" value="Chromosome"/>
</dbReference>
<dbReference type="GO" id="GO:0005737">
    <property type="term" value="C:cytoplasm"/>
    <property type="evidence" value="ECO:0007669"/>
    <property type="project" value="UniProtKB-SubCell"/>
</dbReference>
<dbReference type="GO" id="GO:0000107">
    <property type="term" value="F:imidazoleglycerol-phosphate synthase activity"/>
    <property type="evidence" value="ECO:0007669"/>
    <property type="project" value="UniProtKB-UniRule"/>
</dbReference>
<dbReference type="GO" id="GO:0016829">
    <property type="term" value="F:lyase activity"/>
    <property type="evidence" value="ECO:0007669"/>
    <property type="project" value="UniProtKB-KW"/>
</dbReference>
<dbReference type="GO" id="GO:0000105">
    <property type="term" value="P:L-histidine biosynthetic process"/>
    <property type="evidence" value="ECO:0007669"/>
    <property type="project" value="UniProtKB-UniRule"/>
</dbReference>
<dbReference type="CDD" id="cd04731">
    <property type="entry name" value="HisF"/>
    <property type="match status" value="1"/>
</dbReference>
<dbReference type="FunFam" id="3.20.20.70:FF:000006">
    <property type="entry name" value="Imidazole glycerol phosphate synthase subunit HisF"/>
    <property type="match status" value="1"/>
</dbReference>
<dbReference type="Gene3D" id="3.20.20.70">
    <property type="entry name" value="Aldolase class I"/>
    <property type="match status" value="1"/>
</dbReference>
<dbReference type="HAMAP" id="MF_01013">
    <property type="entry name" value="HisF"/>
    <property type="match status" value="1"/>
</dbReference>
<dbReference type="InterPro" id="IPR013785">
    <property type="entry name" value="Aldolase_TIM"/>
</dbReference>
<dbReference type="InterPro" id="IPR006062">
    <property type="entry name" value="His_biosynth"/>
</dbReference>
<dbReference type="InterPro" id="IPR004651">
    <property type="entry name" value="HisF"/>
</dbReference>
<dbReference type="InterPro" id="IPR050064">
    <property type="entry name" value="IGPS_HisA/HisF"/>
</dbReference>
<dbReference type="InterPro" id="IPR011060">
    <property type="entry name" value="RibuloseP-bd_barrel"/>
</dbReference>
<dbReference type="NCBIfam" id="TIGR00735">
    <property type="entry name" value="hisF"/>
    <property type="match status" value="1"/>
</dbReference>
<dbReference type="PANTHER" id="PTHR21235:SF2">
    <property type="entry name" value="IMIDAZOLE GLYCEROL PHOSPHATE SYNTHASE HISHF"/>
    <property type="match status" value="1"/>
</dbReference>
<dbReference type="PANTHER" id="PTHR21235">
    <property type="entry name" value="IMIDAZOLE GLYCEROL PHOSPHATE SYNTHASE SUBUNIT HISF/H IGP SYNTHASE SUBUNIT HISF/H"/>
    <property type="match status" value="1"/>
</dbReference>
<dbReference type="Pfam" id="PF00977">
    <property type="entry name" value="His_biosynth"/>
    <property type="match status" value="1"/>
</dbReference>
<dbReference type="SUPFAM" id="SSF51366">
    <property type="entry name" value="Ribulose-phoshate binding barrel"/>
    <property type="match status" value="1"/>
</dbReference>
<name>HIS6_AERS4</name>
<evidence type="ECO:0000255" key="1">
    <source>
        <dbReference type="HAMAP-Rule" id="MF_01013"/>
    </source>
</evidence>